<dbReference type="EC" id="6.1.1.5" evidence="1"/>
<dbReference type="EMBL" id="CU468135">
    <property type="protein sequence ID" value="CAO95758.1"/>
    <property type="molecule type" value="Genomic_DNA"/>
</dbReference>
<dbReference type="RefSeq" id="WP_012440460.1">
    <property type="nucleotide sequence ID" value="NC_010694.1"/>
</dbReference>
<dbReference type="SMR" id="B2VGR6"/>
<dbReference type="STRING" id="465817.ETA_07120"/>
<dbReference type="KEGG" id="eta:ETA_07120"/>
<dbReference type="eggNOG" id="COG0060">
    <property type="taxonomic scope" value="Bacteria"/>
</dbReference>
<dbReference type="HOGENOM" id="CLU_001493_7_1_6"/>
<dbReference type="OrthoDB" id="9810365at2"/>
<dbReference type="Proteomes" id="UP000001726">
    <property type="component" value="Chromosome"/>
</dbReference>
<dbReference type="GO" id="GO:0005829">
    <property type="term" value="C:cytosol"/>
    <property type="evidence" value="ECO:0007669"/>
    <property type="project" value="TreeGrafter"/>
</dbReference>
<dbReference type="GO" id="GO:0002161">
    <property type="term" value="F:aminoacyl-tRNA deacylase activity"/>
    <property type="evidence" value="ECO:0007669"/>
    <property type="project" value="InterPro"/>
</dbReference>
<dbReference type="GO" id="GO:0005524">
    <property type="term" value="F:ATP binding"/>
    <property type="evidence" value="ECO:0007669"/>
    <property type="project" value="UniProtKB-UniRule"/>
</dbReference>
<dbReference type="GO" id="GO:0004822">
    <property type="term" value="F:isoleucine-tRNA ligase activity"/>
    <property type="evidence" value="ECO:0007669"/>
    <property type="project" value="UniProtKB-UniRule"/>
</dbReference>
<dbReference type="GO" id="GO:0000049">
    <property type="term" value="F:tRNA binding"/>
    <property type="evidence" value="ECO:0007669"/>
    <property type="project" value="InterPro"/>
</dbReference>
<dbReference type="GO" id="GO:0008270">
    <property type="term" value="F:zinc ion binding"/>
    <property type="evidence" value="ECO:0007669"/>
    <property type="project" value="UniProtKB-UniRule"/>
</dbReference>
<dbReference type="GO" id="GO:0006428">
    <property type="term" value="P:isoleucyl-tRNA aminoacylation"/>
    <property type="evidence" value="ECO:0007669"/>
    <property type="project" value="UniProtKB-UniRule"/>
</dbReference>
<dbReference type="CDD" id="cd07960">
    <property type="entry name" value="Anticodon_Ia_Ile_BEm"/>
    <property type="match status" value="1"/>
</dbReference>
<dbReference type="CDD" id="cd00818">
    <property type="entry name" value="IleRS_core"/>
    <property type="match status" value="1"/>
</dbReference>
<dbReference type="FunFam" id="1.10.730.20:FF:000001">
    <property type="entry name" value="Isoleucine--tRNA ligase"/>
    <property type="match status" value="1"/>
</dbReference>
<dbReference type="FunFam" id="3.40.50.620:FF:000042">
    <property type="entry name" value="Isoleucine--tRNA ligase"/>
    <property type="match status" value="1"/>
</dbReference>
<dbReference type="FunFam" id="3.40.50.620:FF:000048">
    <property type="entry name" value="Isoleucine--tRNA ligase"/>
    <property type="match status" value="1"/>
</dbReference>
<dbReference type="FunFam" id="3.90.740.10:FF:000002">
    <property type="entry name" value="Isoleucine--tRNA ligase"/>
    <property type="match status" value="1"/>
</dbReference>
<dbReference type="Gene3D" id="1.10.730.20">
    <property type="match status" value="1"/>
</dbReference>
<dbReference type="Gene3D" id="3.40.50.620">
    <property type="entry name" value="HUPs"/>
    <property type="match status" value="2"/>
</dbReference>
<dbReference type="Gene3D" id="3.90.740.10">
    <property type="entry name" value="Valyl/Leucyl/Isoleucyl-tRNA synthetase, editing domain"/>
    <property type="match status" value="1"/>
</dbReference>
<dbReference type="HAMAP" id="MF_02002">
    <property type="entry name" value="Ile_tRNA_synth_type1"/>
    <property type="match status" value="1"/>
</dbReference>
<dbReference type="InterPro" id="IPR001412">
    <property type="entry name" value="aa-tRNA-synth_I_CS"/>
</dbReference>
<dbReference type="InterPro" id="IPR002300">
    <property type="entry name" value="aa-tRNA-synth_Ia"/>
</dbReference>
<dbReference type="InterPro" id="IPR033708">
    <property type="entry name" value="Anticodon_Ile_BEm"/>
</dbReference>
<dbReference type="InterPro" id="IPR002301">
    <property type="entry name" value="Ile-tRNA-ligase"/>
</dbReference>
<dbReference type="InterPro" id="IPR023585">
    <property type="entry name" value="Ile-tRNA-ligase_type1"/>
</dbReference>
<dbReference type="InterPro" id="IPR050081">
    <property type="entry name" value="Ile-tRNA_ligase"/>
</dbReference>
<dbReference type="InterPro" id="IPR013155">
    <property type="entry name" value="M/V/L/I-tRNA-synth_anticd-bd"/>
</dbReference>
<dbReference type="InterPro" id="IPR014729">
    <property type="entry name" value="Rossmann-like_a/b/a_fold"/>
</dbReference>
<dbReference type="InterPro" id="IPR009080">
    <property type="entry name" value="tRNAsynth_Ia_anticodon-bd"/>
</dbReference>
<dbReference type="InterPro" id="IPR009008">
    <property type="entry name" value="Val/Leu/Ile-tRNA-synth_edit"/>
</dbReference>
<dbReference type="InterPro" id="IPR010663">
    <property type="entry name" value="Znf_FPG/IleRS"/>
</dbReference>
<dbReference type="NCBIfam" id="TIGR00392">
    <property type="entry name" value="ileS"/>
    <property type="match status" value="1"/>
</dbReference>
<dbReference type="PANTHER" id="PTHR42765:SF1">
    <property type="entry name" value="ISOLEUCINE--TRNA LIGASE, MITOCHONDRIAL"/>
    <property type="match status" value="1"/>
</dbReference>
<dbReference type="PANTHER" id="PTHR42765">
    <property type="entry name" value="SOLEUCYL-TRNA SYNTHETASE"/>
    <property type="match status" value="1"/>
</dbReference>
<dbReference type="Pfam" id="PF08264">
    <property type="entry name" value="Anticodon_1"/>
    <property type="match status" value="1"/>
</dbReference>
<dbReference type="Pfam" id="PF00133">
    <property type="entry name" value="tRNA-synt_1"/>
    <property type="match status" value="1"/>
</dbReference>
<dbReference type="Pfam" id="PF06827">
    <property type="entry name" value="zf-FPG_IleRS"/>
    <property type="match status" value="1"/>
</dbReference>
<dbReference type="PRINTS" id="PR00984">
    <property type="entry name" value="TRNASYNTHILE"/>
</dbReference>
<dbReference type="SUPFAM" id="SSF47323">
    <property type="entry name" value="Anticodon-binding domain of a subclass of class I aminoacyl-tRNA synthetases"/>
    <property type="match status" value="1"/>
</dbReference>
<dbReference type="SUPFAM" id="SSF52374">
    <property type="entry name" value="Nucleotidylyl transferase"/>
    <property type="match status" value="1"/>
</dbReference>
<dbReference type="SUPFAM" id="SSF50677">
    <property type="entry name" value="ValRS/IleRS/LeuRS editing domain"/>
    <property type="match status" value="1"/>
</dbReference>
<dbReference type="PROSITE" id="PS00178">
    <property type="entry name" value="AA_TRNA_LIGASE_I"/>
    <property type="match status" value="1"/>
</dbReference>
<gene>
    <name evidence="1" type="primary">ileS</name>
    <name type="ordered locus">ETA_07120</name>
</gene>
<feature type="chain" id="PRO_1000189164" description="Isoleucine--tRNA ligase">
    <location>
        <begin position="1"/>
        <end position="938"/>
    </location>
</feature>
<feature type="short sequence motif" description="'HIGH' region">
    <location>
        <begin position="58"/>
        <end position="68"/>
    </location>
</feature>
<feature type="short sequence motif" description="'KMSKS' region">
    <location>
        <begin position="602"/>
        <end position="606"/>
    </location>
</feature>
<feature type="binding site" evidence="1">
    <location>
        <position position="561"/>
    </location>
    <ligand>
        <name>L-isoleucyl-5'-AMP</name>
        <dbReference type="ChEBI" id="CHEBI:178002"/>
    </ligand>
</feature>
<feature type="binding site" evidence="1">
    <location>
        <position position="605"/>
    </location>
    <ligand>
        <name>ATP</name>
        <dbReference type="ChEBI" id="CHEBI:30616"/>
    </ligand>
</feature>
<feature type="binding site" evidence="1">
    <location>
        <position position="901"/>
    </location>
    <ligand>
        <name>Zn(2+)</name>
        <dbReference type="ChEBI" id="CHEBI:29105"/>
    </ligand>
</feature>
<feature type="binding site" evidence="1">
    <location>
        <position position="904"/>
    </location>
    <ligand>
        <name>Zn(2+)</name>
        <dbReference type="ChEBI" id="CHEBI:29105"/>
    </ligand>
</feature>
<feature type="binding site" evidence="1">
    <location>
        <position position="921"/>
    </location>
    <ligand>
        <name>Zn(2+)</name>
        <dbReference type="ChEBI" id="CHEBI:29105"/>
    </ligand>
</feature>
<feature type="binding site" evidence="1">
    <location>
        <position position="924"/>
    </location>
    <ligand>
        <name>Zn(2+)</name>
        <dbReference type="ChEBI" id="CHEBI:29105"/>
    </ligand>
</feature>
<accession>B2VGR6</accession>
<comment type="function">
    <text evidence="1">Catalyzes the attachment of isoleucine to tRNA(Ile). As IleRS can inadvertently accommodate and process structurally similar amino acids such as valine, to avoid such errors it has two additional distinct tRNA(Ile)-dependent editing activities. One activity is designated as 'pretransfer' editing and involves the hydrolysis of activated Val-AMP. The other activity is designated 'posttransfer' editing and involves deacylation of mischarged Val-tRNA(Ile).</text>
</comment>
<comment type="catalytic activity">
    <reaction evidence="1">
        <text>tRNA(Ile) + L-isoleucine + ATP = L-isoleucyl-tRNA(Ile) + AMP + diphosphate</text>
        <dbReference type="Rhea" id="RHEA:11060"/>
        <dbReference type="Rhea" id="RHEA-COMP:9666"/>
        <dbReference type="Rhea" id="RHEA-COMP:9695"/>
        <dbReference type="ChEBI" id="CHEBI:30616"/>
        <dbReference type="ChEBI" id="CHEBI:33019"/>
        <dbReference type="ChEBI" id="CHEBI:58045"/>
        <dbReference type="ChEBI" id="CHEBI:78442"/>
        <dbReference type="ChEBI" id="CHEBI:78528"/>
        <dbReference type="ChEBI" id="CHEBI:456215"/>
        <dbReference type="EC" id="6.1.1.5"/>
    </reaction>
</comment>
<comment type="cofactor">
    <cofactor evidence="1">
        <name>Zn(2+)</name>
        <dbReference type="ChEBI" id="CHEBI:29105"/>
    </cofactor>
    <text evidence="1">Binds 1 zinc ion per subunit.</text>
</comment>
<comment type="subunit">
    <text evidence="1">Monomer.</text>
</comment>
<comment type="subcellular location">
    <subcellularLocation>
        <location evidence="1">Cytoplasm</location>
    </subcellularLocation>
</comment>
<comment type="domain">
    <text evidence="1">IleRS has two distinct active sites: one for aminoacylation and one for editing. The misactivated valine is translocated from the active site to the editing site, which sterically excludes the correctly activated isoleucine. The single editing site contains two valyl binding pockets, one specific for each substrate (Val-AMP or Val-tRNA(Ile)).</text>
</comment>
<comment type="similarity">
    <text evidence="1">Belongs to the class-I aminoacyl-tRNA synthetase family. IleS type 1 subfamily.</text>
</comment>
<organism>
    <name type="scientific">Erwinia tasmaniensis (strain DSM 17950 / CFBP 7177 / CIP 109463 / NCPPB 4357 / Et1/99)</name>
    <dbReference type="NCBI Taxonomy" id="465817"/>
    <lineage>
        <taxon>Bacteria</taxon>
        <taxon>Pseudomonadati</taxon>
        <taxon>Pseudomonadota</taxon>
        <taxon>Gammaproteobacteria</taxon>
        <taxon>Enterobacterales</taxon>
        <taxon>Erwiniaceae</taxon>
        <taxon>Erwinia</taxon>
    </lineage>
</organism>
<reference key="1">
    <citation type="journal article" date="2008" name="Environ. Microbiol.">
        <title>The genome of Erwinia tasmaniensis strain Et1/99, a non-pathogenic bacterium in the genus Erwinia.</title>
        <authorList>
            <person name="Kube M."/>
            <person name="Migdoll A.M."/>
            <person name="Mueller I."/>
            <person name="Kuhl H."/>
            <person name="Beck A."/>
            <person name="Reinhardt R."/>
            <person name="Geider K."/>
        </authorList>
    </citation>
    <scope>NUCLEOTIDE SEQUENCE [LARGE SCALE GENOMIC DNA]</scope>
    <source>
        <strain>DSM 17950 / CFBP 7177 / CIP 109463 / NCPPB 4357 / Et1/99</strain>
    </source>
</reference>
<sequence length="938" mass="104632">MSDYKSTLNLPETGFPMRGDLAKREPGMLQRWYDDKLYSIIREAKKGKKTFILHDGPPYANGSIHIGHSVNKILKDIIVKSKGMAGYDSPYVPGWDCHGLPIEHKVEQTIGKPGEKVSAAEFRAACRQYAAEQVEGQKADFIRLGVLGDWDRPYLTMDFKTEANIIRALGKIIGNGHLHKGAKPVHWCLDCRSALAEAEVEYYDKTSPSIDVMFDAVDKDAVQAKFGAAHVNGPISLVIWTTTPWTMPANRAISLHPEFDYQLVQVEGRALILAKDMVDSVMKRVGVTQWTVLGDVQGAALELMGFQHPFLAHVSPVVLGEHVTLEAGTGAVHTAPGHGPDDYVIGQKYGIETANPVGPDGSFLPGTYPTLDGLNVFKANDTIVELLREKGALLHLEKLHHSYPHCWRHKTPIIFRATPQWFISMDQKGLRAQSLKEIKGVQWIPDWGQARIESMVANRPDWCISRQRTWGVPMALFVHKDTEQLHPDSLELMEKVALRVEQDGIQAWWDLDARELMGADADNYVKVPDTLDVWFDSGSTSYSVVDARPEFGGSAPDLYLEGSDQHRGWFMSSLMISTAMKGKAPYRQVLTHGFTVDGQGRKMSKSLGNTVSPQDVMNKLGADILRLWVASTDYSGEIAVSDEILKRSADSYRRIRNTARFLLANLAGFNPETDKVKPEEMVVVDRWAVGRALAAQNDIVASYEAYDFHEVVQRLMQFCSVEMGSFYLDIIKDRQYTAKADGLARRSCQTALWYIVEALVRWMAPIMSFTADEIWGYLPGKRAQYVFTEEWFDGLFSLEDNQPMNDAYWAELLKVRGEVNKVIEQARADKRVGGSLEASVTLYADAQLAEKLTSLGEELRFVLLTSGAEVADYAGAPDDAQQSETVKGLKIALRKAEGEKCPRCWHYTSDIGQNAEHADMCGRCVTNVAGSGEERKFA</sequence>
<keyword id="KW-0030">Aminoacyl-tRNA synthetase</keyword>
<keyword id="KW-0067">ATP-binding</keyword>
<keyword id="KW-0963">Cytoplasm</keyword>
<keyword id="KW-0436">Ligase</keyword>
<keyword id="KW-0479">Metal-binding</keyword>
<keyword id="KW-0547">Nucleotide-binding</keyword>
<keyword id="KW-0648">Protein biosynthesis</keyword>
<keyword id="KW-1185">Reference proteome</keyword>
<keyword id="KW-0862">Zinc</keyword>
<name>SYI_ERWT9</name>
<evidence type="ECO:0000255" key="1">
    <source>
        <dbReference type="HAMAP-Rule" id="MF_02002"/>
    </source>
</evidence>
<proteinExistence type="inferred from homology"/>
<protein>
    <recommendedName>
        <fullName evidence="1">Isoleucine--tRNA ligase</fullName>
        <ecNumber evidence="1">6.1.1.5</ecNumber>
    </recommendedName>
    <alternativeName>
        <fullName evidence="1">Isoleucyl-tRNA synthetase</fullName>
        <shortName evidence="1">IleRS</shortName>
    </alternativeName>
</protein>